<proteinExistence type="inferred from homology"/>
<sequence>MKQKVVSIGDINVANDLPFVLFGGMNVLESRDLAMRICEHYVTVTQKLGIPYVFKASFDKANRSSIHSYRGPGLEEGMKIFQELKQTFGVKIITDVHEPSQAQPVADVVDVIQLPAFLARQTDLVEAMAKTGAVINVKKPQFVSPGQMGNIVDKFKEGGNEKVILCDRGANFGYDNLVVDMLGFSIMKKVSGNSPVIFDVTHALQCRDPFGAASGGRRAQVAELARAGMAVGLAGLFIEAHPDPEHAKCDGPSALPLAKLEPFLKQMKAIDDLVKGFEELDTSK</sequence>
<comment type="catalytic activity">
    <reaction evidence="1">
        <text>D-arabinose 5-phosphate + phosphoenolpyruvate + H2O = 3-deoxy-alpha-D-manno-2-octulosonate-8-phosphate + phosphate</text>
        <dbReference type="Rhea" id="RHEA:14053"/>
        <dbReference type="ChEBI" id="CHEBI:15377"/>
        <dbReference type="ChEBI" id="CHEBI:43474"/>
        <dbReference type="ChEBI" id="CHEBI:57693"/>
        <dbReference type="ChEBI" id="CHEBI:58702"/>
        <dbReference type="ChEBI" id="CHEBI:85985"/>
        <dbReference type="EC" id="2.5.1.55"/>
    </reaction>
</comment>
<comment type="pathway">
    <text evidence="1">Carbohydrate biosynthesis; 3-deoxy-D-manno-octulosonate biosynthesis; 3-deoxy-D-manno-octulosonate from D-ribulose 5-phosphate: step 2/3.</text>
</comment>
<comment type="pathway">
    <text evidence="1">Bacterial outer membrane biogenesis; lipopolysaccharide biosynthesis.</text>
</comment>
<comment type="subcellular location">
    <subcellularLocation>
        <location evidence="1">Cytoplasm</location>
    </subcellularLocation>
</comment>
<comment type="similarity">
    <text evidence="1">Belongs to the KdsA family.</text>
</comment>
<organism>
    <name type="scientific">Escherichia coli O45:K1 (strain S88 / ExPEC)</name>
    <dbReference type="NCBI Taxonomy" id="585035"/>
    <lineage>
        <taxon>Bacteria</taxon>
        <taxon>Pseudomonadati</taxon>
        <taxon>Pseudomonadota</taxon>
        <taxon>Gammaproteobacteria</taxon>
        <taxon>Enterobacterales</taxon>
        <taxon>Enterobacteriaceae</taxon>
        <taxon>Escherichia</taxon>
    </lineage>
</organism>
<accession>B7MKB7</accession>
<keyword id="KW-0963">Cytoplasm</keyword>
<keyword id="KW-0448">Lipopolysaccharide biosynthesis</keyword>
<keyword id="KW-1185">Reference proteome</keyword>
<keyword id="KW-0808">Transferase</keyword>
<feature type="chain" id="PRO_1000116876" description="2-dehydro-3-deoxyphosphooctonate aldolase">
    <location>
        <begin position="1"/>
        <end position="284"/>
    </location>
</feature>
<evidence type="ECO:0000255" key="1">
    <source>
        <dbReference type="HAMAP-Rule" id="MF_00056"/>
    </source>
</evidence>
<dbReference type="EC" id="2.5.1.55" evidence="1"/>
<dbReference type="EMBL" id="CU928161">
    <property type="protein sequence ID" value="CAR02609.1"/>
    <property type="molecule type" value="Genomic_DNA"/>
</dbReference>
<dbReference type="RefSeq" id="WP_000811065.1">
    <property type="nucleotide sequence ID" value="NC_011742.1"/>
</dbReference>
<dbReference type="SMR" id="B7MKB7"/>
<dbReference type="GeneID" id="75203328"/>
<dbReference type="KEGG" id="ecz:ECS88_1283"/>
<dbReference type="HOGENOM" id="CLU_036666_0_0_6"/>
<dbReference type="UniPathway" id="UPA00030"/>
<dbReference type="UniPathway" id="UPA00357">
    <property type="reaction ID" value="UER00474"/>
</dbReference>
<dbReference type="Proteomes" id="UP000000747">
    <property type="component" value="Chromosome"/>
</dbReference>
<dbReference type="GO" id="GO:0005737">
    <property type="term" value="C:cytoplasm"/>
    <property type="evidence" value="ECO:0007669"/>
    <property type="project" value="UniProtKB-SubCell"/>
</dbReference>
<dbReference type="GO" id="GO:0008676">
    <property type="term" value="F:3-deoxy-8-phosphooctulonate synthase activity"/>
    <property type="evidence" value="ECO:0007669"/>
    <property type="project" value="UniProtKB-UniRule"/>
</dbReference>
<dbReference type="GO" id="GO:0019294">
    <property type="term" value="P:keto-3-deoxy-D-manno-octulosonic acid biosynthetic process"/>
    <property type="evidence" value="ECO:0007669"/>
    <property type="project" value="UniProtKB-UniRule"/>
</dbReference>
<dbReference type="FunFam" id="3.20.20.70:FF:000058">
    <property type="entry name" value="2-dehydro-3-deoxyphosphooctonate aldolase"/>
    <property type="match status" value="1"/>
</dbReference>
<dbReference type="Gene3D" id="3.20.20.70">
    <property type="entry name" value="Aldolase class I"/>
    <property type="match status" value="1"/>
</dbReference>
<dbReference type="HAMAP" id="MF_00056">
    <property type="entry name" value="KDO8P_synth"/>
    <property type="match status" value="1"/>
</dbReference>
<dbReference type="InterPro" id="IPR013785">
    <property type="entry name" value="Aldolase_TIM"/>
</dbReference>
<dbReference type="InterPro" id="IPR006218">
    <property type="entry name" value="DAHP1/KDSA"/>
</dbReference>
<dbReference type="InterPro" id="IPR006269">
    <property type="entry name" value="KDO8P_synthase"/>
</dbReference>
<dbReference type="NCBIfam" id="TIGR01362">
    <property type="entry name" value="KDO8P_synth"/>
    <property type="match status" value="1"/>
</dbReference>
<dbReference type="NCBIfam" id="NF003543">
    <property type="entry name" value="PRK05198.1"/>
    <property type="match status" value="1"/>
</dbReference>
<dbReference type="NCBIfam" id="NF009109">
    <property type="entry name" value="PRK12457.1"/>
    <property type="match status" value="1"/>
</dbReference>
<dbReference type="PANTHER" id="PTHR21057">
    <property type="entry name" value="PHOSPHO-2-DEHYDRO-3-DEOXYHEPTONATE ALDOLASE"/>
    <property type="match status" value="1"/>
</dbReference>
<dbReference type="Pfam" id="PF00793">
    <property type="entry name" value="DAHP_synth_1"/>
    <property type="match status" value="1"/>
</dbReference>
<dbReference type="SUPFAM" id="SSF51569">
    <property type="entry name" value="Aldolase"/>
    <property type="match status" value="1"/>
</dbReference>
<protein>
    <recommendedName>
        <fullName evidence="1">2-dehydro-3-deoxyphosphooctonate aldolase</fullName>
        <ecNumber evidence="1">2.5.1.55</ecNumber>
    </recommendedName>
    <alternativeName>
        <fullName evidence="1">3-deoxy-D-manno-octulosonic acid 8-phosphate synthase</fullName>
    </alternativeName>
    <alternativeName>
        <fullName evidence="1">KDO-8-phosphate synthase</fullName>
        <shortName evidence="1">KDO 8-P synthase</shortName>
        <shortName evidence="1">KDOPS</shortName>
    </alternativeName>
    <alternativeName>
        <fullName evidence="1">Phospho-2-dehydro-3-deoxyoctonate aldolase</fullName>
    </alternativeName>
</protein>
<reference key="1">
    <citation type="journal article" date="2009" name="PLoS Genet.">
        <title>Organised genome dynamics in the Escherichia coli species results in highly diverse adaptive paths.</title>
        <authorList>
            <person name="Touchon M."/>
            <person name="Hoede C."/>
            <person name="Tenaillon O."/>
            <person name="Barbe V."/>
            <person name="Baeriswyl S."/>
            <person name="Bidet P."/>
            <person name="Bingen E."/>
            <person name="Bonacorsi S."/>
            <person name="Bouchier C."/>
            <person name="Bouvet O."/>
            <person name="Calteau A."/>
            <person name="Chiapello H."/>
            <person name="Clermont O."/>
            <person name="Cruveiller S."/>
            <person name="Danchin A."/>
            <person name="Diard M."/>
            <person name="Dossat C."/>
            <person name="Karoui M.E."/>
            <person name="Frapy E."/>
            <person name="Garry L."/>
            <person name="Ghigo J.M."/>
            <person name="Gilles A.M."/>
            <person name="Johnson J."/>
            <person name="Le Bouguenec C."/>
            <person name="Lescat M."/>
            <person name="Mangenot S."/>
            <person name="Martinez-Jehanne V."/>
            <person name="Matic I."/>
            <person name="Nassif X."/>
            <person name="Oztas S."/>
            <person name="Petit M.A."/>
            <person name="Pichon C."/>
            <person name="Rouy Z."/>
            <person name="Ruf C.S."/>
            <person name="Schneider D."/>
            <person name="Tourret J."/>
            <person name="Vacherie B."/>
            <person name="Vallenet D."/>
            <person name="Medigue C."/>
            <person name="Rocha E.P.C."/>
            <person name="Denamur E."/>
        </authorList>
    </citation>
    <scope>NUCLEOTIDE SEQUENCE [LARGE SCALE GENOMIC DNA]</scope>
    <source>
        <strain>S88 / ExPEC</strain>
    </source>
</reference>
<gene>
    <name evidence="1" type="primary">kdsA</name>
    <name type="ordered locus">ECS88_1283</name>
</gene>
<name>KDSA_ECO45</name>